<reference key="1">
    <citation type="journal article" date="2002" name="Mol. Microbiol.">
        <title>Genome sequence of Streptococcus agalactiae, a pathogen causing invasive neonatal disease.</title>
        <authorList>
            <person name="Glaser P."/>
            <person name="Rusniok C."/>
            <person name="Buchrieser C."/>
            <person name="Chevalier F."/>
            <person name="Frangeul L."/>
            <person name="Msadek T."/>
            <person name="Zouine M."/>
            <person name="Couve E."/>
            <person name="Lalioui L."/>
            <person name="Poyart C."/>
            <person name="Trieu-Cuot P."/>
            <person name="Kunst F."/>
        </authorList>
    </citation>
    <scope>NUCLEOTIDE SEQUENCE [LARGE SCALE GENOMIC DNA]</scope>
    <source>
        <strain>NEM316</strain>
    </source>
</reference>
<evidence type="ECO:0000255" key="1">
    <source>
        <dbReference type="HAMAP-Rule" id="MF_01451"/>
    </source>
</evidence>
<dbReference type="EC" id="3.1.-.-" evidence="1"/>
<dbReference type="EC" id="5.6.2.4" evidence="1"/>
<dbReference type="EMBL" id="AL766847">
    <property type="protein sequence ID" value="CAD46535.1"/>
    <property type="molecule type" value="Genomic_DNA"/>
</dbReference>
<dbReference type="RefSeq" id="WP_000143226.1">
    <property type="nucleotide sequence ID" value="NC_004368.1"/>
</dbReference>
<dbReference type="SMR" id="Q8E5T9"/>
<dbReference type="KEGG" id="san:gbs0891"/>
<dbReference type="eggNOG" id="COG1074">
    <property type="taxonomic scope" value="Bacteria"/>
</dbReference>
<dbReference type="HOGENOM" id="CLU_001114_3_1_9"/>
<dbReference type="Proteomes" id="UP000000823">
    <property type="component" value="Chromosome"/>
</dbReference>
<dbReference type="GO" id="GO:0005829">
    <property type="term" value="C:cytosol"/>
    <property type="evidence" value="ECO:0007669"/>
    <property type="project" value="TreeGrafter"/>
</dbReference>
<dbReference type="GO" id="GO:0033202">
    <property type="term" value="C:DNA helicase complex"/>
    <property type="evidence" value="ECO:0007669"/>
    <property type="project" value="TreeGrafter"/>
</dbReference>
<dbReference type="GO" id="GO:0043138">
    <property type="term" value="F:3'-5' DNA helicase activity"/>
    <property type="evidence" value="ECO:0007669"/>
    <property type="project" value="UniProtKB-UniRule"/>
</dbReference>
<dbReference type="GO" id="GO:0008408">
    <property type="term" value="F:3'-5' exonuclease activity"/>
    <property type="evidence" value="ECO:0007669"/>
    <property type="project" value="UniProtKB-UniRule"/>
</dbReference>
<dbReference type="GO" id="GO:0005524">
    <property type="term" value="F:ATP binding"/>
    <property type="evidence" value="ECO:0007669"/>
    <property type="project" value="UniProtKB-UniRule"/>
</dbReference>
<dbReference type="GO" id="GO:0016887">
    <property type="term" value="F:ATP hydrolysis activity"/>
    <property type="evidence" value="ECO:0007669"/>
    <property type="project" value="RHEA"/>
</dbReference>
<dbReference type="GO" id="GO:0003690">
    <property type="term" value="F:double-stranded DNA binding"/>
    <property type="evidence" value="ECO:0007669"/>
    <property type="project" value="UniProtKB-UniRule"/>
</dbReference>
<dbReference type="GO" id="GO:0000724">
    <property type="term" value="P:double-strand break repair via homologous recombination"/>
    <property type="evidence" value="ECO:0007669"/>
    <property type="project" value="UniProtKB-UniRule"/>
</dbReference>
<dbReference type="CDD" id="cd17932">
    <property type="entry name" value="DEXQc_UvrD"/>
    <property type="match status" value="1"/>
</dbReference>
<dbReference type="Gene3D" id="3.90.320.10">
    <property type="match status" value="1"/>
</dbReference>
<dbReference type="Gene3D" id="3.40.50.300">
    <property type="entry name" value="P-loop containing nucleotide triphosphate hydrolases"/>
    <property type="match status" value="4"/>
</dbReference>
<dbReference type="Gene3D" id="1.10.486.10">
    <property type="entry name" value="PCRA, domain 4"/>
    <property type="match status" value="1"/>
</dbReference>
<dbReference type="HAMAP" id="MF_01451">
    <property type="entry name" value="AddA"/>
    <property type="match status" value="1"/>
</dbReference>
<dbReference type="InterPro" id="IPR014152">
    <property type="entry name" value="AddA"/>
</dbReference>
<dbReference type="InterPro" id="IPR014017">
    <property type="entry name" value="DNA_helicase_UvrD-like_C"/>
</dbReference>
<dbReference type="InterPro" id="IPR000212">
    <property type="entry name" value="DNA_helicase_UvrD/REP"/>
</dbReference>
<dbReference type="InterPro" id="IPR027417">
    <property type="entry name" value="P-loop_NTPase"/>
</dbReference>
<dbReference type="InterPro" id="IPR011604">
    <property type="entry name" value="PDDEXK-like_dom_sf"/>
</dbReference>
<dbReference type="InterPro" id="IPR038726">
    <property type="entry name" value="PDDEXK_AddAB-type"/>
</dbReference>
<dbReference type="InterPro" id="IPR011335">
    <property type="entry name" value="Restrct_endonuc-II-like"/>
</dbReference>
<dbReference type="InterPro" id="IPR014016">
    <property type="entry name" value="UvrD-like_ATP-bd"/>
</dbReference>
<dbReference type="NCBIfam" id="TIGR02785">
    <property type="entry name" value="addA_Gpos"/>
    <property type="match status" value="1"/>
</dbReference>
<dbReference type="PANTHER" id="PTHR11070:SF48">
    <property type="entry name" value="ATP-DEPENDENT HELICASE_NUCLEASE SUBUNIT A"/>
    <property type="match status" value="1"/>
</dbReference>
<dbReference type="PANTHER" id="PTHR11070">
    <property type="entry name" value="UVRD / RECB / PCRA DNA HELICASE FAMILY MEMBER"/>
    <property type="match status" value="1"/>
</dbReference>
<dbReference type="Pfam" id="PF12705">
    <property type="entry name" value="PDDEXK_1"/>
    <property type="match status" value="1"/>
</dbReference>
<dbReference type="Pfam" id="PF00580">
    <property type="entry name" value="UvrD-helicase"/>
    <property type="match status" value="1"/>
</dbReference>
<dbReference type="Pfam" id="PF13361">
    <property type="entry name" value="UvrD_C"/>
    <property type="match status" value="1"/>
</dbReference>
<dbReference type="SUPFAM" id="SSF52540">
    <property type="entry name" value="P-loop containing nucleoside triphosphate hydrolases"/>
    <property type="match status" value="1"/>
</dbReference>
<dbReference type="SUPFAM" id="SSF52980">
    <property type="entry name" value="Restriction endonuclease-like"/>
    <property type="match status" value="1"/>
</dbReference>
<dbReference type="PROSITE" id="PS51198">
    <property type="entry name" value="UVRD_HELICASE_ATP_BIND"/>
    <property type="match status" value="1"/>
</dbReference>
<dbReference type="PROSITE" id="PS51217">
    <property type="entry name" value="UVRD_HELICASE_CTER"/>
    <property type="match status" value="1"/>
</dbReference>
<sequence>MTFKPFLNPEDIAVIQTEEKNSDKKQKRTPEQIEAIYTFGNNVLVSASAGSGKTFVMVERILDKLLRGVPIDSLFISTFTVKAAGELKERLEKKINESLKSAESDDLKQFLTQQLVGIQTADIGTMDAFTQKIVNQYGYTLGISPIFRILQDKNEQDVIKNEVYADLFSDYMTGKNAASFIKLVKNFSGNRKDSKAFREMVYKVYAFSQSTDNPKRWMQTVFLKGAQTYTDFEAIPDQEVSSLLNVMQTTANQLRDLTDQEDYKQLTAKGVPTANYKKHLKIIENLVHWSQDFNLLYGKKGLANLARDITNVIPSGNDVTVAGVKYPIFKQLHNRIVGLKHLEVIFKYQGESLFLLELLQSFVLDFSEQYLQEKIQENAFEFSDIAHFAIQILEENHDIRQLYQDKYHEVMVDEYQDNNHTQERMLELLSNGHNRFMVGDIKQSIYRFRQADPQIFNDKYKAYQDNPSQGKLIILKENFRSQSEVLDSTNSVFTHLMDEEVGDILYDESHQLKAGSPRQQERHPNNKTQVLLLDTDEDDINDSDSQQYDISPAEAKLVAKEIIRLHKEENVPFQDITLLVSSRTRNDGILQTFDRYGIPLVTDGGEQNYLKSVEVMVMLDTLRSIDNPLNDYALVALLRSPMFGFNEDDLTRIAIQDVKMAFYHKVKLSYHKEGHHSDLITPELSSKIDHFMKTFQTWRDFAKWHSLYDLIWKIYNDRFYYDYVGALPKAEQRQANLYALALRANQFEKTGFKGLSRFIRMIDKVLENENDLADVEVALPQNAVNLMTIHKSKGLEFKYVFILNIDKKFSMVDITSPLILSRNQGIGIKYVADMRHELEEELLPAVKVSMETLPYQLNKRELRLATLSEQMRLLYVAMTRAEKKLYLVGKASQTKWADHYDLVSENNHLPLASRETFVTFQDWLLAVHETYKKQELFYDINFVSLEELTDHHIGMVNPSLPFNPDNKAENRQSEDIVRAISVLESVEQINQTYKAAIELPTVRTPSQVKKFYEPILDIEGVDVMETITKTSVDFKLPDFSTSKKQDPAALGSAVHELMQRIEMSSHVKMEDIQKALTEVNAETSVKAAIQIEKINYFFQETSLGKYIQEEVEHLHREAPFAMLKEDPESGEKFVVRGIIDGYLLLENRIILFDYKTDKFVNPLELKERYQGQMALYAEALKKSYEIEKIDKYLILLGGKQLEVVKMD</sequence>
<feature type="chain" id="PRO_0000379327" description="ATP-dependent helicase/nuclease subunit A">
    <location>
        <begin position="1"/>
        <end position="1207"/>
    </location>
</feature>
<feature type="domain" description="UvrD-like helicase ATP-binding" evidence="1">
    <location>
        <begin position="26"/>
        <end position="482"/>
    </location>
</feature>
<feature type="domain" description="UvrD-like helicase C-terminal" evidence="1">
    <location>
        <begin position="510"/>
        <end position="794"/>
    </location>
</feature>
<feature type="binding site" evidence="1">
    <location>
        <begin position="47"/>
        <end position="54"/>
    </location>
    <ligand>
        <name>ATP</name>
        <dbReference type="ChEBI" id="CHEBI:30616"/>
    </ligand>
</feature>
<name>ADDA_STRA3</name>
<comment type="function">
    <text evidence="1">The heterodimer acts as both an ATP-dependent DNA helicase and an ATP-dependent, dual-direction single-stranded exonuclease. Recognizes the chi site generating a DNA molecule suitable for the initiation of homologous recombination. The AddA nuclease domain is required for chi fragment generation; this subunit has the helicase and 3' -&gt; 5' nuclease activities.</text>
</comment>
<comment type="catalytic activity">
    <reaction evidence="1">
        <text>Couples ATP hydrolysis with the unwinding of duplex DNA by translocating in the 3'-5' direction.</text>
        <dbReference type="EC" id="5.6.2.4"/>
    </reaction>
</comment>
<comment type="catalytic activity">
    <reaction evidence="1">
        <text>ATP + H2O = ADP + phosphate + H(+)</text>
        <dbReference type="Rhea" id="RHEA:13065"/>
        <dbReference type="ChEBI" id="CHEBI:15377"/>
        <dbReference type="ChEBI" id="CHEBI:15378"/>
        <dbReference type="ChEBI" id="CHEBI:30616"/>
        <dbReference type="ChEBI" id="CHEBI:43474"/>
        <dbReference type="ChEBI" id="CHEBI:456216"/>
        <dbReference type="EC" id="5.6.2.4"/>
    </reaction>
</comment>
<comment type="cofactor">
    <cofactor evidence="1">
        <name>Mg(2+)</name>
        <dbReference type="ChEBI" id="CHEBI:18420"/>
    </cofactor>
</comment>
<comment type="subunit">
    <text evidence="1">Heterodimer of AddA and AddB/RexB.</text>
</comment>
<comment type="similarity">
    <text evidence="1">Belongs to the helicase family. AddA subfamily.</text>
</comment>
<organism>
    <name type="scientific">Streptococcus agalactiae serotype III (strain NEM316)</name>
    <dbReference type="NCBI Taxonomy" id="211110"/>
    <lineage>
        <taxon>Bacteria</taxon>
        <taxon>Bacillati</taxon>
        <taxon>Bacillota</taxon>
        <taxon>Bacilli</taxon>
        <taxon>Lactobacillales</taxon>
        <taxon>Streptococcaceae</taxon>
        <taxon>Streptococcus</taxon>
    </lineage>
</organism>
<keyword id="KW-0067">ATP-binding</keyword>
<keyword id="KW-0227">DNA damage</keyword>
<keyword id="KW-0234">DNA repair</keyword>
<keyword id="KW-0238">DNA-binding</keyword>
<keyword id="KW-0269">Exonuclease</keyword>
<keyword id="KW-0347">Helicase</keyword>
<keyword id="KW-0378">Hydrolase</keyword>
<keyword id="KW-0413">Isomerase</keyword>
<keyword id="KW-0540">Nuclease</keyword>
<keyword id="KW-0547">Nucleotide-binding</keyword>
<proteinExistence type="inferred from homology"/>
<gene>
    <name evidence="1" type="primary">addA</name>
    <name type="ordered locus">gbs0891</name>
</gene>
<accession>Q8E5T9</accession>
<protein>
    <recommendedName>
        <fullName evidence="1">ATP-dependent helicase/nuclease subunit A</fullName>
        <ecNumber evidence="1">3.1.-.-</ecNumber>
        <ecNumber evidence="1">5.6.2.4</ecNumber>
    </recommendedName>
    <alternativeName>
        <fullName evidence="1">ATP-dependent helicase/nuclease AddA</fullName>
    </alternativeName>
    <alternativeName>
        <fullName evidence="1">DNA 3'-5' helicase AddA</fullName>
    </alternativeName>
</protein>